<name>ERPA_PSEF5</name>
<organism>
    <name type="scientific">Pseudomonas fluorescens (strain ATCC BAA-477 / NRRL B-23932 / Pf-5)</name>
    <dbReference type="NCBI Taxonomy" id="220664"/>
    <lineage>
        <taxon>Bacteria</taxon>
        <taxon>Pseudomonadati</taxon>
        <taxon>Pseudomonadota</taxon>
        <taxon>Gammaproteobacteria</taxon>
        <taxon>Pseudomonadales</taxon>
        <taxon>Pseudomonadaceae</taxon>
        <taxon>Pseudomonas</taxon>
    </lineage>
</organism>
<protein>
    <recommendedName>
        <fullName evidence="1">Iron-sulfur cluster insertion protein ErpA</fullName>
    </recommendedName>
</protein>
<gene>
    <name evidence="1" type="primary">erpA</name>
    <name type="ordered locus">PFL_5610</name>
</gene>
<comment type="function">
    <text evidence="1">Required for insertion of 4Fe-4S clusters for at least IspG.</text>
</comment>
<comment type="cofactor">
    <cofactor evidence="1">
        <name>iron-sulfur cluster</name>
        <dbReference type="ChEBI" id="CHEBI:30408"/>
    </cofactor>
    <text evidence="1">Binds 1 iron-sulfur cluster per subunit.</text>
</comment>
<comment type="subunit">
    <text evidence="1">Homodimer.</text>
</comment>
<comment type="similarity">
    <text evidence="1">Belongs to the HesB/IscA family.</text>
</comment>
<sequence length="116" mass="12534">MSVESFTPTALQFTQGAAHKVKTLVDEEGNDRLKLRVFVTGGGCSGFQYGFTFDEEVAEDDTIVEREGVSLVVDPMSFQYLAGAEVDYQEGLEGSRFVIKNPNATTTCGCGSSFSI</sequence>
<evidence type="ECO:0000255" key="1">
    <source>
        <dbReference type="HAMAP-Rule" id="MF_01380"/>
    </source>
</evidence>
<dbReference type="EMBL" id="CP000076">
    <property type="protein sequence ID" value="AAY94803.1"/>
    <property type="molecule type" value="Genomic_DNA"/>
</dbReference>
<dbReference type="RefSeq" id="WP_011063789.1">
    <property type="nucleotide sequence ID" value="NC_004129.6"/>
</dbReference>
<dbReference type="SMR" id="Q4K514"/>
<dbReference type="STRING" id="220664.PFL_5610"/>
<dbReference type="GeneID" id="57478560"/>
<dbReference type="KEGG" id="pfl:PFL_5610"/>
<dbReference type="eggNOG" id="COG0316">
    <property type="taxonomic scope" value="Bacteria"/>
</dbReference>
<dbReference type="HOGENOM" id="CLU_069054_5_3_6"/>
<dbReference type="Proteomes" id="UP000008540">
    <property type="component" value="Chromosome"/>
</dbReference>
<dbReference type="GO" id="GO:0005829">
    <property type="term" value="C:cytosol"/>
    <property type="evidence" value="ECO:0007669"/>
    <property type="project" value="TreeGrafter"/>
</dbReference>
<dbReference type="GO" id="GO:0051537">
    <property type="term" value="F:2 iron, 2 sulfur cluster binding"/>
    <property type="evidence" value="ECO:0007669"/>
    <property type="project" value="UniProtKB-ARBA"/>
</dbReference>
<dbReference type="GO" id="GO:0051539">
    <property type="term" value="F:4 iron, 4 sulfur cluster binding"/>
    <property type="evidence" value="ECO:0007669"/>
    <property type="project" value="TreeGrafter"/>
</dbReference>
<dbReference type="GO" id="GO:0005506">
    <property type="term" value="F:iron ion binding"/>
    <property type="evidence" value="ECO:0007669"/>
    <property type="project" value="UniProtKB-UniRule"/>
</dbReference>
<dbReference type="GO" id="GO:0016226">
    <property type="term" value="P:iron-sulfur cluster assembly"/>
    <property type="evidence" value="ECO:0007669"/>
    <property type="project" value="UniProtKB-UniRule"/>
</dbReference>
<dbReference type="FunFam" id="2.60.300.12:FF:000002">
    <property type="entry name" value="Iron-sulfur cluster insertion protein ErpA"/>
    <property type="match status" value="1"/>
</dbReference>
<dbReference type="Gene3D" id="2.60.300.12">
    <property type="entry name" value="HesB-like domain"/>
    <property type="match status" value="1"/>
</dbReference>
<dbReference type="HAMAP" id="MF_01380">
    <property type="entry name" value="Fe_S_insert_ErpA"/>
    <property type="match status" value="1"/>
</dbReference>
<dbReference type="InterPro" id="IPR000361">
    <property type="entry name" value="FeS_biogenesis"/>
</dbReference>
<dbReference type="InterPro" id="IPR016092">
    <property type="entry name" value="FeS_cluster_insertion"/>
</dbReference>
<dbReference type="InterPro" id="IPR017870">
    <property type="entry name" value="FeS_cluster_insertion_CS"/>
</dbReference>
<dbReference type="InterPro" id="IPR023063">
    <property type="entry name" value="FeS_cluster_insertion_RrpA"/>
</dbReference>
<dbReference type="InterPro" id="IPR035903">
    <property type="entry name" value="HesB-like_dom_sf"/>
</dbReference>
<dbReference type="NCBIfam" id="TIGR00049">
    <property type="entry name" value="iron-sulfur cluster assembly accessory protein"/>
    <property type="match status" value="1"/>
</dbReference>
<dbReference type="NCBIfam" id="NF010147">
    <property type="entry name" value="PRK13623.1"/>
    <property type="match status" value="1"/>
</dbReference>
<dbReference type="PANTHER" id="PTHR43011">
    <property type="entry name" value="IRON-SULFUR CLUSTER ASSEMBLY 2 HOMOLOG, MITOCHONDRIAL"/>
    <property type="match status" value="1"/>
</dbReference>
<dbReference type="PANTHER" id="PTHR43011:SF1">
    <property type="entry name" value="IRON-SULFUR CLUSTER ASSEMBLY 2 HOMOLOG, MITOCHONDRIAL"/>
    <property type="match status" value="1"/>
</dbReference>
<dbReference type="Pfam" id="PF01521">
    <property type="entry name" value="Fe-S_biosyn"/>
    <property type="match status" value="1"/>
</dbReference>
<dbReference type="SUPFAM" id="SSF89360">
    <property type="entry name" value="HesB-like domain"/>
    <property type="match status" value="1"/>
</dbReference>
<dbReference type="PROSITE" id="PS01152">
    <property type="entry name" value="HESB"/>
    <property type="match status" value="1"/>
</dbReference>
<feature type="chain" id="PRO_0000311526" description="Iron-sulfur cluster insertion protein ErpA">
    <location>
        <begin position="1"/>
        <end position="116"/>
    </location>
</feature>
<feature type="binding site" evidence="1">
    <location>
        <position position="44"/>
    </location>
    <ligand>
        <name>iron-sulfur cluster</name>
        <dbReference type="ChEBI" id="CHEBI:30408"/>
    </ligand>
</feature>
<feature type="binding site" evidence="1">
    <location>
        <position position="108"/>
    </location>
    <ligand>
        <name>iron-sulfur cluster</name>
        <dbReference type="ChEBI" id="CHEBI:30408"/>
    </ligand>
</feature>
<feature type="binding site" evidence="1">
    <location>
        <position position="110"/>
    </location>
    <ligand>
        <name>iron-sulfur cluster</name>
        <dbReference type="ChEBI" id="CHEBI:30408"/>
    </ligand>
</feature>
<accession>Q4K514</accession>
<reference key="1">
    <citation type="journal article" date="2005" name="Nat. Biotechnol.">
        <title>Complete genome sequence of the plant commensal Pseudomonas fluorescens Pf-5.</title>
        <authorList>
            <person name="Paulsen I.T."/>
            <person name="Press C.M."/>
            <person name="Ravel J."/>
            <person name="Kobayashi D.Y."/>
            <person name="Myers G.S.A."/>
            <person name="Mavrodi D.V."/>
            <person name="DeBoy R.T."/>
            <person name="Seshadri R."/>
            <person name="Ren Q."/>
            <person name="Madupu R."/>
            <person name="Dodson R.J."/>
            <person name="Durkin A.S."/>
            <person name="Brinkac L.M."/>
            <person name="Daugherty S.C."/>
            <person name="Sullivan S.A."/>
            <person name="Rosovitz M.J."/>
            <person name="Gwinn M.L."/>
            <person name="Zhou L."/>
            <person name="Schneider D.J."/>
            <person name="Cartinhour S.W."/>
            <person name="Nelson W.C."/>
            <person name="Weidman J."/>
            <person name="Watkins K."/>
            <person name="Tran K."/>
            <person name="Khouri H."/>
            <person name="Pierson E.A."/>
            <person name="Pierson L.S. III"/>
            <person name="Thomashow L.S."/>
            <person name="Loper J.E."/>
        </authorList>
    </citation>
    <scope>NUCLEOTIDE SEQUENCE [LARGE SCALE GENOMIC DNA]</scope>
    <source>
        <strain>ATCC BAA-477 / NRRL B-23932 / Pf-5</strain>
    </source>
</reference>
<proteinExistence type="inferred from homology"/>
<keyword id="KW-0408">Iron</keyword>
<keyword id="KW-0411">Iron-sulfur</keyword>
<keyword id="KW-0479">Metal-binding</keyword>